<keyword id="KW-0113">Calvin cycle</keyword>
<keyword id="KW-0120">Carbon dioxide fixation</keyword>
<keyword id="KW-0456">Lyase</keyword>
<keyword id="KW-0460">Magnesium</keyword>
<keyword id="KW-0479">Metal-binding</keyword>
<keyword id="KW-0503">Monooxygenase</keyword>
<keyword id="KW-0560">Oxidoreductase</keyword>
<keyword id="KW-0614">Plasmid</keyword>
<keyword id="KW-1185">Reference proteome</keyword>
<protein>
    <recommendedName>
        <fullName evidence="1">Ribulose bisphosphate carboxylase large chain</fullName>
        <shortName evidence="1">RuBisCO large subunit</shortName>
        <ecNumber evidence="1">4.1.1.39</ecNumber>
    </recommendedName>
</protein>
<geneLocation type="plasmid">
    <name>pSymB</name>
    <name>megaplasmid 2</name>
</geneLocation>
<name>RBL1_RHIME</name>
<evidence type="ECO:0000255" key="1">
    <source>
        <dbReference type="HAMAP-Rule" id="MF_01338"/>
    </source>
</evidence>
<dbReference type="EC" id="4.1.1.39" evidence="1"/>
<dbReference type="EMBL" id="AL591985">
    <property type="protein sequence ID" value="CAC48591.1"/>
    <property type="molecule type" value="Genomic_DNA"/>
</dbReference>
<dbReference type="PIR" id="G95865">
    <property type="entry name" value="G95865"/>
</dbReference>
<dbReference type="RefSeq" id="NP_436731.1">
    <property type="nucleotide sequence ID" value="NC_003078.1"/>
</dbReference>
<dbReference type="RefSeq" id="WP_010975100.1">
    <property type="nucleotide sequence ID" value="NC_003078.1"/>
</dbReference>
<dbReference type="SMR" id="P58348"/>
<dbReference type="EnsemblBacteria" id="CAC48591">
    <property type="protein sequence ID" value="CAC48591"/>
    <property type="gene ID" value="SM_b20198"/>
</dbReference>
<dbReference type="KEGG" id="sme:SM_b20198"/>
<dbReference type="PATRIC" id="fig|266834.11.peg.5107"/>
<dbReference type="eggNOG" id="COG1850">
    <property type="taxonomic scope" value="Bacteria"/>
</dbReference>
<dbReference type="HOGENOM" id="CLU_031450_2_0_5"/>
<dbReference type="OrthoDB" id="9764279at2"/>
<dbReference type="PRO" id="PR:P58348"/>
<dbReference type="Proteomes" id="UP000001976">
    <property type="component" value="Plasmid pSymB"/>
</dbReference>
<dbReference type="GO" id="GO:0000287">
    <property type="term" value="F:magnesium ion binding"/>
    <property type="evidence" value="ECO:0007669"/>
    <property type="project" value="UniProtKB-UniRule"/>
</dbReference>
<dbReference type="GO" id="GO:0004497">
    <property type="term" value="F:monooxygenase activity"/>
    <property type="evidence" value="ECO:0007669"/>
    <property type="project" value="UniProtKB-KW"/>
</dbReference>
<dbReference type="GO" id="GO:0016984">
    <property type="term" value="F:ribulose-bisphosphate carboxylase activity"/>
    <property type="evidence" value="ECO:0007669"/>
    <property type="project" value="UniProtKB-UniRule"/>
</dbReference>
<dbReference type="GO" id="GO:0019253">
    <property type="term" value="P:reductive pentose-phosphate cycle"/>
    <property type="evidence" value="ECO:0007669"/>
    <property type="project" value="UniProtKB-UniRule"/>
</dbReference>
<dbReference type="CDD" id="cd08212">
    <property type="entry name" value="RuBisCO_large_I"/>
    <property type="match status" value="1"/>
</dbReference>
<dbReference type="Gene3D" id="3.20.20.110">
    <property type="entry name" value="Ribulose bisphosphate carboxylase, large subunit, C-terminal domain"/>
    <property type="match status" value="1"/>
</dbReference>
<dbReference type="Gene3D" id="3.30.70.150">
    <property type="entry name" value="RuBisCO large subunit, N-terminal domain"/>
    <property type="match status" value="1"/>
</dbReference>
<dbReference type="HAMAP" id="MF_01338">
    <property type="entry name" value="RuBisCO_L_type1"/>
    <property type="match status" value="1"/>
</dbReference>
<dbReference type="InterPro" id="IPR033966">
    <property type="entry name" value="RuBisCO"/>
</dbReference>
<dbReference type="InterPro" id="IPR020878">
    <property type="entry name" value="RuBisCo_large_chain_AS"/>
</dbReference>
<dbReference type="InterPro" id="IPR000685">
    <property type="entry name" value="RuBisCO_lsu_C"/>
</dbReference>
<dbReference type="InterPro" id="IPR036376">
    <property type="entry name" value="RuBisCO_lsu_C_sf"/>
</dbReference>
<dbReference type="InterPro" id="IPR017443">
    <property type="entry name" value="RuBisCO_lsu_fd_N"/>
</dbReference>
<dbReference type="InterPro" id="IPR036422">
    <property type="entry name" value="RuBisCO_lsu_N_sf"/>
</dbReference>
<dbReference type="InterPro" id="IPR020888">
    <property type="entry name" value="RuBisCO_lsuI"/>
</dbReference>
<dbReference type="NCBIfam" id="NF003252">
    <property type="entry name" value="PRK04208.1"/>
    <property type="match status" value="1"/>
</dbReference>
<dbReference type="PANTHER" id="PTHR42704">
    <property type="entry name" value="RIBULOSE BISPHOSPHATE CARBOXYLASE"/>
    <property type="match status" value="1"/>
</dbReference>
<dbReference type="PANTHER" id="PTHR42704:SF17">
    <property type="entry name" value="RIBULOSE BISPHOSPHATE CARBOXYLASE LARGE CHAIN"/>
    <property type="match status" value="1"/>
</dbReference>
<dbReference type="Pfam" id="PF00016">
    <property type="entry name" value="RuBisCO_large"/>
    <property type="match status" value="1"/>
</dbReference>
<dbReference type="Pfam" id="PF02788">
    <property type="entry name" value="RuBisCO_large_N"/>
    <property type="match status" value="1"/>
</dbReference>
<dbReference type="SFLD" id="SFLDG01052">
    <property type="entry name" value="RuBisCO"/>
    <property type="match status" value="1"/>
</dbReference>
<dbReference type="SFLD" id="SFLDS00014">
    <property type="entry name" value="RuBisCO"/>
    <property type="match status" value="1"/>
</dbReference>
<dbReference type="SFLD" id="SFLDG00301">
    <property type="entry name" value="RuBisCO-like_proteins"/>
    <property type="match status" value="1"/>
</dbReference>
<dbReference type="SUPFAM" id="SSF51649">
    <property type="entry name" value="RuBisCo, C-terminal domain"/>
    <property type="match status" value="1"/>
</dbReference>
<dbReference type="SUPFAM" id="SSF54966">
    <property type="entry name" value="RuBisCO, large subunit, small (N-terminal) domain"/>
    <property type="match status" value="1"/>
</dbReference>
<dbReference type="PROSITE" id="PS00157">
    <property type="entry name" value="RUBISCO_LARGE"/>
    <property type="match status" value="1"/>
</dbReference>
<organism>
    <name type="scientific">Rhizobium meliloti (strain 1021)</name>
    <name type="common">Ensifer meliloti</name>
    <name type="synonym">Sinorhizobium meliloti</name>
    <dbReference type="NCBI Taxonomy" id="266834"/>
    <lineage>
        <taxon>Bacteria</taxon>
        <taxon>Pseudomonadati</taxon>
        <taxon>Pseudomonadota</taxon>
        <taxon>Alphaproteobacteria</taxon>
        <taxon>Hyphomicrobiales</taxon>
        <taxon>Rhizobiaceae</taxon>
        <taxon>Sinorhizobium/Ensifer group</taxon>
        <taxon>Sinorhizobium</taxon>
    </lineage>
</organism>
<feature type="chain" id="PRO_0000062643" description="Ribulose bisphosphate carboxylase large chain">
    <location>
        <begin position="1"/>
        <end position="486"/>
    </location>
</feature>
<feature type="active site" description="Proton acceptor" evidence="1">
    <location>
        <position position="178"/>
    </location>
</feature>
<feature type="active site" description="Proton acceptor" evidence="1">
    <location>
        <position position="296"/>
    </location>
</feature>
<feature type="binding site" description="in homodimeric partner" evidence="1">
    <location>
        <position position="126"/>
    </location>
    <ligand>
        <name>substrate</name>
    </ligand>
</feature>
<feature type="binding site" evidence="1">
    <location>
        <position position="176"/>
    </location>
    <ligand>
        <name>substrate</name>
    </ligand>
</feature>
<feature type="binding site" evidence="1">
    <location>
        <position position="180"/>
    </location>
    <ligand>
        <name>substrate</name>
    </ligand>
</feature>
<feature type="binding site" description="via carbamate group" evidence="1">
    <location>
        <position position="204"/>
    </location>
    <ligand>
        <name>Mg(2+)</name>
        <dbReference type="ChEBI" id="CHEBI:18420"/>
    </ligand>
</feature>
<feature type="binding site" evidence="1">
    <location>
        <position position="206"/>
    </location>
    <ligand>
        <name>Mg(2+)</name>
        <dbReference type="ChEBI" id="CHEBI:18420"/>
    </ligand>
</feature>
<feature type="binding site" evidence="1">
    <location>
        <position position="207"/>
    </location>
    <ligand>
        <name>Mg(2+)</name>
        <dbReference type="ChEBI" id="CHEBI:18420"/>
    </ligand>
</feature>
<feature type="binding site" evidence="1">
    <location>
        <position position="297"/>
    </location>
    <ligand>
        <name>substrate</name>
    </ligand>
</feature>
<feature type="binding site" evidence="1">
    <location>
        <position position="329"/>
    </location>
    <ligand>
        <name>substrate</name>
    </ligand>
</feature>
<feature type="binding site" evidence="1">
    <location>
        <position position="381"/>
    </location>
    <ligand>
        <name>substrate</name>
    </ligand>
</feature>
<feature type="site" description="Transition state stabilizer" evidence="1">
    <location>
        <position position="336"/>
    </location>
</feature>
<feature type="modified residue" description="N6-carboxylysine" evidence="1">
    <location>
        <position position="204"/>
    </location>
</feature>
<proteinExistence type="inferred from homology"/>
<sequence length="486" mass="53791">MNADAKTEIKGRERYKAGVLKYAQMGYWNGDYEPKDTDLIALFRITPQDGVDPIEAAAAVAGESSTATWTVVWTDRLTACDQYRAKAYRVDPVPGTPGQYFCYVAYDLILFEEGSIANLTASIIGNVFSFKPLKAARLEDMRLPVAYVKTFRGPPTGIVVERERLDKFGKPLLGATTKPKLGLSGKNYGRVVYEGLKGGLDFMKDDENINSQPFMHWRDRYLYCMEAVNHASAVTGEVKGHYLNITAGTMEEMYRRAEFAKELGSVIVMVDLIVGWTAIQSISEWCRQNDMILHMHRAGHGTYTRQKNHGISFRVIAKWLRLAGVDHLHAGTAVGKLEGDPPTVQGYYNVCREMKNEVDLPRGLFFEQDWADLKKVMPVASGGIHAGQMHQLLDLFGDDVVLQFGGGTIGHPMGIQAGATANRVALEAMVLARNEGRDIAHEGPEILRAAAKWCKPLEAALDIWGNISFNYTPTDTSDFVPSVTAA</sequence>
<comment type="function">
    <text evidence="1">RuBisCO catalyzes two reactions: the carboxylation of D-ribulose 1,5-bisphosphate, the primary event in carbon dioxide fixation, as well as the oxidative fragmentation of the pentose substrate. Both reactions occur simultaneously and in competition at the same active site.</text>
</comment>
<comment type="catalytic activity">
    <reaction evidence="1">
        <text>2 (2R)-3-phosphoglycerate + 2 H(+) = D-ribulose 1,5-bisphosphate + CO2 + H2O</text>
        <dbReference type="Rhea" id="RHEA:23124"/>
        <dbReference type="ChEBI" id="CHEBI:15377"/>
        <dbReference type="ChEBI" id="CHEBI:15378"/>
        <dbReference type="ChEBI" id="CHEBI:16526"/>
        <dbReference type="ChEBI" id="CHEBI:57870"/>
        <dbReference type="ChEBI" id="CHEBI:58272"/>
        <dbReference type="EC" id="4.1.1.39"/>
    </reaction>
</comment>
<comment type="catalytic activity">
    <reaction evidence="1">
        <text>D-ribulose 1,5-bisphosphate + O2 = 2-phosphoglycolate + (2R)-3-phosphoglycerate + 2 H(+)</text>
        <dbReference type="Rhea" id="RHEA:36631"/>
        <dbReference type="ChEBI" id="CHEBI:15378"/>
        <dbReference type="ChEBI" id="CHEBI:15379"/>
        <dbReference type="ChEBI" id="CHEBI:57870"/>
        <dbReference type="ChEBI" id="CHEBI:58033"/>
        <dbReference type="ChEBI" id="CHEBI:58272"/>
    </reaction>
</comment>
<comment type="cofactor">
    <cofactor evidence="1">
        <name>Mg(2+)</name>
        <dbReference type="ChEBI" id="CHEBI:18420"/>
    </cofactor>
    <text evidence="1">Binds 1 Mg(2+) ion per subunit.</text>
</comment>
<comment type="subunit">
    <text evidence="1">Heterohexadecamer of 8 large chains and 8 small chains.</text>
</comment>
<comment type="miscellaneous">
    <text evidence="1">The basic functional RuBisCO is composed of a large chain homodimer in a 'head-to-tail' conformation. In form I RuBisCO this homodimer is arranged in a barrel-like tetramer with the small subunits forming a tetrameric 'cap' on each end of the 'barrel'.</text>
</comment>
<comment type="similarity">
    <text evidence="1">Belongs to the RuBisCO large chain family. Type I subfamily.</text>
</comment>
<accession>P58348</accession>
<gene>
    <name evidence="1" type="primary">cbbL</name>
    <name type="ordered locus">RB0191</name>
    <name type="ORF">SMb20198</name>
</gene>
<reference key="1">
    <citation type="journal article" date="2001" name="Proc. Natl. Acad. Sci. U.S.A.">
        <title>The complete sequence of the 1,683-kb pSymB megaplasmid from the N2-fixing endosymbiont Sinorhizobium meliloti.</title>
        <authorList>
            <person name="Finan T.M."/>
            <person name="Weidner S."/>
            <person name="Wong K."/>
            <person name="Buhrmester J."/>
            <person name="Chain P."/>
            <person name="Vorhoelter F.J."/>
            <person name="Hernandez-Lucas I."/>
            <person name="Becker A."/>
            <person name="Cowie A."/>
            <person name="Gouzy J."/>
            <person name="Golding B."/>
            <person name="Puehler A."/>
        </authorList>
    </citation>
    <scope>NUCLEOTIDE SEQUENCE [LARGE SCALE GENOMIC DNA]</scope>
    <source>
        <strain>1021</strain>
    </source>
</reference>
<reference key="2">
    <citation type="journal article" date="2001" name="Science">
        <title>The composite genome of the legume symbiont Sinorhizobium meliloti.</title>
        <authorList>
            <person name="Galibert F."/>
            <person name="Finan T.M."/>
            <person name="Long S.R."/>
            <person name="Puehler A."/>
            <person name="Abola P."/>
            <person name="Ampe F."/>
            <person name="Barloy-Hubler F."/>
            <person name="Barnett M.J."/>
            <person name="Becker A."/>
            <person name="Boistard P."/>
            <person name="Bothe G."/>
            <person name="Boutry M."/>
            <person name="Bowser L."/>
            <person name="Buhrmester J."/>
            <person name="Cadieu E."/>
            <person name="Capela D."/>
            <person name="Chain P."/>
            <person name="Cowie A."/>
            <person name="Davis R.W."/>
            <person name="Dreano S."/>
            <person name="Federspiel N.A."/>
            <person name="Fisher R.F."/>
            <person name="Gloux S."/>
            <person name="Godrie T."/>
            <person name="Goffeau A."/>
            <person name="Golding B."/>
            <person name="Gouzy J."/>
            <person name="Gurjal M."/>
            <person name="Hernandez-Lucas I."/>
            <person name="Hong A."/>
            <person name="Huizar L."/>
            <person name="Hyman R.W."/>
            <person name="Jones T."/>
            <person name="Kahn D."/>
            <person name="Kahn M.L."/>
            <person name="Kalman S."/>
            <person name="Keating D.H."/>
            <person name="Kiss E."/>
            <person name="Komp C."/>
            <person name="Lelaure V."/>
            <person name="Masuy D."/>
            <person name="Palm C."/>
            <person name="Peck M.C."/>
            <person name="Pohl T.M."/>
            <person name="Portetelle D."/>
            <person name="Purnelle B."/>
            <person name="Ramsperger U."/>
            <person name="Surzycki R."/>
            <person name="Thebault P."/>
            <person name="Vandenbol M."/>
            <person name="Vorhoelter F.J."/>
            <person name="Weidner S."/>
            <person name="Wells D.H."/>
            <person name="Wong K."/>
            <person name="Yeh K.-C."/>
            <person name="Batut J."/>
        </authorList>
    </citation>
    <scope>NUCLEOTIDE SEQUENCE [LARGE SCALE GENOMIC DNA]</scope>
    <source>
        <strain>1021</strain>
    </source>
</reference>